<accession>Q5KU26</accession>
<accession>Q6P9F2</accession>
<accession>Q8TCR2</accession>
<accession>Q8WZA4</accession>
<accession>Q9BY85</accession>
<accession>Q9BYH7</accession>
<organism>
    <name type="scientific">Homo sapiens</name>
    <name type="common">Human</name>
    <dbReference type="NCBI Taxonomy" id="9606"/>
    <lineage>
        <taxon>Eukaryota</taxon>
        <taxon>Metazoa</taxon>
        <taxon>Chordata</taxon>
        <taxon>Craniata</taxon>
        <taxon>Vertebrata</taxon>
        <taxon>Euteleostomi</taxon>
        <taxon>Mammalia</taxon>
        <taxon>Eutheria</taxon>
        <taxon>Euarchontoglires</taxon>
        <taxon>Primates</taxon>
        <taxon>Haplorrhini</taxon>
        <taxon>Catarrhini</taxon>
        <taxon>Hominidae</taxon>
        <taxon>Homo</taxon>
    </lineage>
</organism>
<keyword id="KW-0002">3D-structure</keyword>
<keyword id="KW-0106">Calcium</keyword>
<keyword id="KW-0175">Coiled coil</keyword>
<keyword id="KW-0176">Collagen</keyword>
<keyword id="KW-1015">Disulfide bond</keyword>
<keyword id="KW-0325">Glycoprotein</keyword>
<keyword id="KW-0430">Lectin</keyword>
<keyword id="KW-0472">Membrane</keyword>
<keyword id="KW-0479">Metal-binding</keyword>
<keyword id="KW-1267">Proteomics identification</keyword>
<keyword id="KW-0675">Receptor</keyword>
<keyword id="KW-1185">Reference proteome</keyword>
<keyword id="KW-0677">Repeat</keyword>
<keyword id="KW-0735">Signal-anchor</keyword>
<keyword id="KW-0812">Transmembrane</keyword>
<keyword id="KW-1133">Transmembrane helix</keyword>
<comment type="function">
    <text evidence="5 6 8 10 11">Scavenger receptor that displays several functions associated with host defense. Promotes binding and phagocytosis of Gram-positive, Gram-negative bacteria and yeast. Mediates the recognition, internalization and degradation of oxidatively modified low density lipoprotein (oxLDL) by vascular endothelial cells. Binds to several carbohydrates including Gal-type ligands, D-galactose, L- and D-fucose, GalNAc, T and Tn antigens in a calcium-dependent manner and internalizes specifically GalNAc in nurse-like cells. Also binds to sialyl Lewis X or a trisaccharide and asialo-orosomucoid (ASOR). May also play a role in the clearance of amyloid-beta in Alzheimer disease.</text>
</comment>
<comment type="subunit">
    <text evidence="10 11 12">The extracellular domain forms a stable trimer. The extracellular domain interacts with fibrillar amyloid-beta peptide.</text>
</comment>
<comment type="interaction">
    <interactant intactId="EBI-1104680">
        <id>Q5KU26</id>
    </interactant>
    <interactant intactId="EBI-1395983">
        <id>P02741</id>
        <label>CRP</label>
    </interactant>
    <organismsDiffer>false</organismsDiffer>
    <experiments>3</experiments>
</comment>
<comment type="interaction">
    <interactant intactId="EBI-1104680">
        <id>Q5KU26</id>
    </interactant>
    <interactant intactId="EBI-965833">
        <id>Q9UKJ1</id>
        <label>PILRA</label>
    </interactant>
    <organismsDiffer>false</organismsDiffer>
    <experiments>2</experiments>
</comment>
<comment type="interaction">
    <interactant intactId="EBI-1104680">
        <id>Q5KU26</id>
    </interactant>
    <interactant intactId="EBI-8657660">
        <id>Q6AZY7</id>
        <label>SCARA3</label>
    </interactant>
    <organismsDiffer>false</organismsDiffer>
    <experiments>2</experiments>
</comment>
<comment type="subcellular location">
    <subcellularLocation>
        <location evidence="5">Membrane</location>
        <topology evidence="5">Single-pass type II membrane protein</topology>
    </subcellularLocation>
    <text>Forms clusters on the cell surface.</text>
</comment>
<comment type="tissue specificity">
    <text evidence="5 6 8 11">Expressed in perivascular macrophages. Expressed in plaques-surrounding reactive astrocytes and in perivascular astrocytes associated with cerebral amyloid angiopathy (CAA) in the temporal cortex of Alzheimer patient (at protein level). Strongly expressed in placenta. Moderately expressed in heart, skeletal muscle, small intestine and lung. Weakly expressed in brain, colon, thymus and kidney. Expressed in nurse-like cells. Expressed in reactive astrocytes and vascular/perivascular cells in the brain of Alzheimer patient.</text>
</comment>
<comment type="sequence caution" evidence="13">
    <conflict type="miscellaneous discrepancy">
        <sequence resource="EMBL-CDS" id="BAB39148"/>
    </conflict>
    <text>Probable cloning artifact.</text>
</comment>
<proteinExistence type="evidence at protein level"/>
<dbReference type="EMBL" id="AB038518">
    <property type="protein sequence ID" value="BAB39147.1"/>
    <property type="molecule type" value="mRNA"/>
</dbReference>
<dbReference type="EMBL" id="AB052103">
    <property type="protein sequence ID" value="BAB39148.1"/>
    <property type="status" value="ALT_SEQ"/>
    <property type="molecule type" value="mRNA"/>
</dbReference>
<dbReference type="EMBL" id="AB005145">
    <property type="protein sequence ID" value="BAB72147.1"/>
    <property type="molecule type" value="mRNA"/>
</dbReference>
<dbReference type="EMBL" id="AB034251">
    <property type="protein sequence ID" value="BAD83592.1"/>
    <property type="molecule type" value="mRNA"/>
</dbReference>
<dbReference type="EMBL" id="AP000915">
    <property type="status" value="NOT_ANNOTATED_CDS"/>
    <property type="molecule type" value="Genomic_DNA"/>
</dbReference>
<dbReference type="EMBL" id="AP005240">
    <property type="status" value="NOT_ANNOTATED_CDS"/>
    <property type="molecule type" value="Genomic_DNA"/>
</dbReference>
<dbReference type="EMBL" id="BC060789">
    <property type="protein sequence ID" value="AAH60789.1"/>
    <property type="molecule type" value="mRNA"/>
</dbReference>
<dbReference type="EMBL" id="AL713657">
    <property type="protein sequence ID" value="CAD28466.1"/>
    <property type="molecule type" value="mRNA"/>
</dbReference>
<dbReference type="CCDS" id="CCDS32782.1"/>
<dbReference type="PIR" id="JC7595">
    <property type="entry name" value="JC7595"/>
</dbReference>
<dbReference type="RefSeq" id="NP_569057.2">
    <property type="nucleotide sequence ID" value="NM_130386.3"/>
</dbReference>
<dbReference type="PDB" id="2OX8">
    <property type="method" value="X-ray"/>
    <property type="resolution" value="2.50 A"/>
    <property type="chains" value="A/B/C/D=607-742"/>
</dbReference>
<dbReference type="PDBsum" id="2OX8"/>
<dbReference type="SMR" id="Q5KU26"/>
<dbReference type="BioGRID" id="123353">
    <property type="interactions" value="67"/>
</dbReference>
<dbReference type="FunCoup" id="Q5KU26">
    <property type="interactions" value="787"/>
</dbReference>
<dbReference type="IntAct" id="Q5KU26">
    <property type="interactions" value="54"/>
</dbReference>
<dbReference type="STRING" id="9606.ENSP00000383115"/>
<dbReference type="UniLectin" id="Q5KU26"/>
<dbReference type="GlyConnect" id="1141">
    <property type="glycosylation" value="1 N-Linked glycan (1 site)"/>
</dbReference>
<dbReference type="GlyCosmos" id="Q5KU26">
    <property type="glycosylation" value="5 sites, 1 glycan"/>
</dbReference>
<dbReference type="GlyGen" id="Q5KU26">
    <property type="glycosylation" value="9 sites, 9 N-linked glycans (8 sites)"/>
</dbReference>
<dbReference type="iPTMnet" id="Q5KU26"/>
<dbReference type="PhosphoSitePlus" id="Q5KU26"/>
<dbReference type="SwissPalm" id="Q5KU26"/>
<dbReference type="BioMuta" id="COLEC12"/>
<dbReference type="DMDM" id="296439391"/>
<dbReference type="jPOST" id="Q5KU26"/>
<dbReference type="MassIVE" id="Q5KU26"/>
<dbReference type="PaxDb" id="9606-ENSP00000383115"/>
<dbReference type="PeptideAtlas" id="Q5KU26"/>
<dbReference type="ProteomicsDB" id="63550"/>
<dbReference type="Pumba" id="Q5KU26"/>
<dbReference type="Antibodypedia" id="21901">
    <property type="antibodies" value="227 antibodies from 26 providers"/>
</dbReference>
<dbReference type="DNASU" id="81035"/>
<dbReference type="Ensembl" id="ENST00000400256.5">
    <property type="protein sequence ID" value="ENSP00000383115.3"/>
    <property type="gene ID" value="ENSG00000158270.12"/>
</dbReference>
<dbReference type="GeneID" id="81035"/>
<dbReference type="KEGG" id="hsa:81035"/>
<dbReference type="MANE-Select" id="ENST00000400256.5">
    <property type="protein sequence ID" value="ENSP00000383115.3"/>
    <property type="RefSeq nucleotide sequence ID" value="NM_130386.3"/>
    <property type="RefSeq protein sequence ID" value="NP_569057.2"/>
</dbReference>
<dbReference type="UCSC" id="uc002kkm.4">
    <property type="organism name" value="human"/>
</dbReference>
<dbReference type="AGR" id="HGNC:16016"/>
<dbReference type="CTD" id="81035"/>
<dbReference type="DisGeNET" id="81035"/>
<dbReference type="GeneCards" id="COLEC12"/>
<dbReference type="HGNC" id="HGNC:16016">
    <property type="gene designation" value="COLEC12"/>
</dbReference>
<dbReference type="HPA" id="ENSG00000158270">
    <property type="expression patterns" value="Tissue enhanced (cervix)"/>
</dbReference>
<dbReference type="MIM" id="607621">
    <property type="type" value="gene"/>
</dbReference>
<dbReference type="neXtProt" id="NX_Q5KU26"/>
<dbReference type="OpenTargets" id="ENSG00000158270"/>
<dbReference type="PharmGKB" id="PA26738"/>
<dbReference type="VEuPathDB" id="HostDB:ENSG00000158270"/>
<dbReference type="eggNOG" id="ENOG502QQKQ">
    <property type="taxonomic scope" value="Eukaryota"/>
</dbReference>
<dbReference type="GeneTree" id="ENSGT00950000183074"/>
<dbReference type="HOGENOM" id="CLU_022132_0_0_1"/>
<dbReference type="InParanoid" id="Q5KU26"/>
<dbReference type="OMA" id="EANKFCK"/>
<dbReference type="OrthoDB" id="9896688at2759"/>
<dbReference type="PAN-GO" id="Q5KU26">
    <property type="GO annotations" value="4 GO annotations based on evolutionary models"/>
</dbReference>
<dbReference type="PhylomeDB" id="Q5KU26"/>
<dbReference type="TreeFam" id="TF332426"/>
<dbReference type="PathwayCommons" id="Q5KU26"/>
<dbReference type="Reactome" id="R-HSA-198933">
    <property type="pathway name" value="Immunoregulatory interactions between a Lymphoid and a non-Lymphoid cell"/>
</dbReference>
<dbReference type="Reactome" id="R-HSA-3000480">
    <property type="pathway name" value="Scavenging by Class A Receptors"/>
</dbReference>
<dbReference type="SignaLink" id="Q5KU26"/>
<dbReference type="BioGRID-ORCS" id="81035">
    <property type="hits" value="14 hits in 1148 CRISPR screens"/>
</dbReference>
<dbReference type="ChiTaRS" id="COLEC12">
    <property type="organism name" value="human"/>
</dbReference>
<dbReference type="EvolutionaryTrace" id="Q5KU26"/>
<dbReference type="GenomeRNAi" id="81035"/>
<dbReference type="Pharos" id="Q5KU26">
    <property type="development level" value="Tbio"/>
</dbReference>
<dbReference type="PRO" id="PR:Q5KU26"/>
<dbReference type="Proteomes" id="UP000005640">
    <property type="component" value="Chromosome 18"/>
</dbReference>
<dbReference type="RNAct" id="Q5KU26">
    <property type="molecule type" value="protein"/>
</dbReference>
<dbReference type="Bgee" id="ENSG00000158270">
    <property type="expression patterns" value="Expressed in synovial joint and 201 other cell types or tissues"/>
</dbReference>
<dbReference type="GO" id="GO:0005581">
    <property type="term" value="C:collagen trimer"/>
    <property type="evidence" value="ECO:0007669"/>
    <property type="project" value="UniProtKB-KW"/>
</dbReference>
<dbReference type="GO" id="GO:0062023">
    <property type="term" value="C:collagen-containing extracellular matrix"/>
    <property type="evidence" value="ECO:0000318"/>
    <property type="project" value="GO_Central"/>
</dbReference>
<dbReference type="GO" id="GO:0030666">
    <property type="term" value="C:endocytic vesicle membrane"/>
    <property type="evidence" value="ECO:0000304"/>
    <property type="project" value="Reactome"/>
</dbReference>
<dbReference type="GO" id="GO:0005615">
    <property type="term" value="C:extracellular space"/>
    <property type="evidence" value="ECO:0000318"/>
    <property type="project" value="GO_Central"/>
</dbReference>
<dbReference type="GO" id="GO:0016020">
    <property type="term" value="C:membrane"/>
    <property type="evidence" value="ECO:0000304"/>
    <property type="project" value="UniProtKB"/>
</dbReference>
<dbReference type="GO" id="GO:0005886">
    <property type="term" value="C:plasma membrane"/>
    <property type="evidence" value="ECO:0000304"/>
    <property type="project" value="Reactome"/>
</dbReference>
<dbReference type="GO" id="GO:0005534">
    <property type="term" value="F:galactose binding"/>
    <property type="evidence" value="ECO:0000303"/>
    <property type="project" value="UniProtKB"/>
</dbReference>
<dbReference type="GO" id="GO:0030169">
    <property type="term" value="F:low-density lipoprotein particle binding"/>
    <property type="evidence" value="ECO:0000314"/>
    <property type="project" value="UniProtKB"/>
</dbReference>
<dbReference type="GO" id="GO:0046872">
    <property type="term" value="F:metal ion binding"/>
    <property type="evidence" value="ECO:0007669"/>
    <property type="project" value="UniProtKB-KW"/>
</dbReference>
<dbReference type="GO" id="GO:0038187">
    <property type="term" value="F:pattern recognition receptor activity"/>
    <property type="evidence" value="ECO:0000314"/>
    <property type="project" value="UniProtKB"/>
</dbReference>
<dbReference type="GO" id="GO:0005044">
    <property type="term" value="F:scavenger receptor activity"/>
    <property type="evidence" value="ECO:0000314"/>
    <property type="project" value="UniProtKB"/>
</dbReference>
<dbReference type="GO" id="GO:0009756">
    <property type="term" value="P:carbohydrate mediated signaling"/>
    <property type="evidence" value="ECO:0000303"/>
    <property type="project" value="UniProtKB"/>
</dbReference>
<dbReference type="GO" id="GO:0071360">
    <property type="term" value="P:cellular response to exogenous dsRNA"/>
    <property type="evidence" value="ECO:0000315"/>
    <property type="project" value="UniProtKB"/>
</dbReference>
<dbReference type="GO" id="GO:0006952">
    <property type="term" value="P:defense response"/>
    <property type="evidence" value="ECO:0000304"/>
    <property type="project" value="UniProtKB"/>
</dbReference>
<dbReference type="GO" id="GO:0042742">
    <property type="term" value="P:defense response to bacterium"/>
    <property type="evidence" value="ECO:0000314"/>
    <property type="project" value="UniProtKB"/>
</dbReference>
<dbReference type="GO" id="GO:0045087">
    <property type="term" value="P:innate immune response"/>
    <property type="evidence" value="ECO:0000304"/>
    <property type="project" value="UniProtKB"/>
</dbReference>
<dbReference type="GO" id="GO:0006910">
    <property type="term" value="P:phagocytosis, recognition"/>
    <property type="evidence" value="ECO:0000314"/>
    <property type="project" value="UniProtKB"/>
</dbReference>
<dbReference type="GO" id="GO:0044857">
    <property type="term" value="P:plasma membrane raft organization"/>
    <property type="evidence" value="ECO:0000315"/>
    <property type="project" value="GO_Central"/>
</dbReference>
<dbReference type="GO" id="GO:0034138">
    <property type="term" value="P:toll-like receptor 3 signaling pathway"/>
    <property type="evidence" value="ECO:0000315"/>
    <property type="project" value="UniProtKB"/>
</dbReference>
<dbReference type="CDD" id="cd03590">
    <property type="entry name" value="CLECT_DC-SIGN_like"/>
    <property type="match status" value="1"/>
</dbReference>
<dbReference type="FunFam" id="3.10.100.10:FF:000017">
    <property type="entry name" value="collectin-12 isoform X1"/>
    <property type="match status" value="1"/>
</dbReference>
<dbReference type="Gene3D" id="3.10.100.10">
    <property type="entry name" value="Mannose-Binding Protein A, subunit A"/>
    <property type="match status" value="1"/>
</dbReference>
<dbReference type="InterPro" id="IPR001304">
    <property type="entry name" value="C-type_lectin-like"/>
</dbReference>
<dbReference type="InterPro" id="IPR016186">
    <property type="entry name" value="C-type_lectin-like/link_sf"/>
</dbReference>
<dbReference type="InterPro" id="IPR050111">
    <property type="entry name" value="C-type_lectin/snaclec_domain"/>
</dbReference>
<dbReference type="InterPro" id="IPR018378">
    <property type="entry name" value="C-type_lectin_CS"/>
</dbReference>
<dbReference type="InterPro" id="IPR033989">
    <property type="entry name" value="CD209-like_CTLD"/>
</dbReference>
<dbReference type="InterPro" id="IPR008160">
    <property type="entry name" value="Collagen"/>
</dbReference>
<dbReference type="InterPro" id="IPR016187">
    <property type="entry name" value="CTDL_fold"/>
</dbReference>
<dbReference type="PANTHER" id="PTHR22803">
    <property type="entry name" value="MANNOSE, PHOSPHOLIPASE, LECTIN RECEPTOR RELATED"/>
    <property type="match status" value="1"/>
</dbReference>
<dbReference type="Pfam" id="PF01391">
    <property type="entry name" value="Collagen"/>
    <property type="match status" value="2"/>
</dbReference>
<dbReference type="Pfam" id="PF00059">
    <property type="entry name" value="Lectin_C"/>
    <property type="match status" value="1"/>
</dbReference>
<dbReference type="SMART" id="SM00034">
    <property type="entry name" value="CLECT"/>
    <property type="match status" value="1"/>
</dbReference>
<dbReference type="SUPFAM" id="SSF56436">
    <property type="entry name" value="C-type lectin-like"/>
    <property type="match status" value="1"/>
</dbReference>
<dbReference type="PROSITE" id="PS00615">
    <property type="entry name" value="C_TYPE_LECTIN_1"/>
    <property type="match status" value="1"/>
</dbReference>
<dbReference type="PROSITE" id="PS50041">
    <property type="entry name" value="C_TYPE_LECTIN_2"/>
    <property type="match status" value="1"/>
</dbReference>
<protein>
    <recommendedName>
        <fullName>Collectin-12</fullName>
    </recommendedName>
    <alternativeName>
        <fullName>Collectin placenta protein 1</fullName>
        <shortName>CL-P1</shortName>
        <shortName>hCL-P1</shortName>
    </alternativeName>
    <alternativeName>
        <fullName>Nurse cell scavenger receptor 2</fullName>
    </alternativeName>
    <alternativeName>
        <fullName>Scavenger receptor class A member 4</fullName>
    </alternativeName>
    <alternativeName>
        <fullName>Scavenger receptor with C-type lectin</fullName>
    </alternativeName>
</protein>
<name>COL12_HUMAN</name>
<reference key="1">
    <citation type="journal article" date="2001" name="Biochem. Biophys. Res. Commun.">
        <title>Molecular cloning and functional characterization of a human scavenger receptor with C-type lectin (SRCL), a novel member of a scavenger receptor family.</title>
        <authorList>
            <person name="Nakamura K."/>
            <person name="Funakoshi H."/>
            <person name="Miyamoto K."/>
            <person name="Tokunaga F."/>
            <person name="Nakamura T."/>
        </authorList>
    </citation>
    <scope>NUCLEOTIDE SEQUENCE [MRNA]</scope>
    <scope>FUNCTION</scope>
    <scope>SUBCELLULAR LOCATION</scope>
    <scope>TISSUE SPECIFICITY</scope>
    <scope>VARIANTS PRO-522 AND SER-606</scope>
    <source>
        <tissue>Placenta</tissue>
    </source>
</reference>
<reference key="2">
    <citation type="journal article" date="2001" name="J. Biol. Chem.">
        <title>The membrane-type collectin CL-P1 is a scavenger receptor on vascular endothelial cells.</title>
        <authorList>
            <person name="Ohtani K."/>
            <person name="Suzuki Y."/>
            <person name="Eda S."/>
            <person name="Kawai T."/>
            <person name="Kase T."/>
            <person name="Keshi H."/>
            <person name="Sakai Y."/>
            <person name="Fukuoh A."/>
            <person name="Sakamoto T."/>
            <person name="Itabe H."/>
            <person name="Suzutani T."/>
            <person name="Ogasawara M."/>
            <person name="Yoshida I."/>
            <person name="Wakamiya N."/>
        </authorList>
    </citation>
    <scope>NUCLEOTIDE SEQUENCE [MRNA]</scope>
    <scope>FUNCTION</scope>
    <scope>TISSUE SPECIFICITY</scope>
    <scope>VARIANT PRO-522</scope>
    <source>
        <tissue>Lung</tissue>
        <tissue>Placenta</tissue>
    </source>
</reference>
<reference key="3">
    <citation type="journal article" date="2003" name="J. Biochem.">
        <title>SRCL/CL-P1 recognizes GalNAc and a carcinoma-associated antigen, Tn antigen.</title>
        <authorList>
            <person name="Yoshida T."/>
            <person name="Tsuruta Y."/>
            <person name="Iwasaki M."/>
            <person name="Yamane S."/>
            <person name="Ochi T."/>
            <person name="Suzuki R."/>
        </authorList>
    </citation>
    <scope>NUCLEOTIDE SEQUENCE [MRNA]</scope>
    <scope>FUNCTION</scope>
    <scope>TISSUE SPECIFICITY</scope>
    <scope>VARIANT PRO-522</scope>
</reference>
<reference key="4">
    <citation type="journal article" date="2005" name="Nature">
        <title>DNA sequence and analysis of human chromosome 18.</title>
        <authorList>
            <person name="Nusbaum C."/>
            <person name="Zody M.C."/>
            <person name="Borowsky M.L."/>
            <person name="Kamal M."/>
            <person name="Kodira C.D."/>
            <person name="Taylor T.D."/>
            <person name="Whittaker C.A."/>
            <person name="Chang J.L."/>
            <person name="Cuomo C.A."/>
            <person name="Dewar K."/>
            <person name="FitzGerald M.G."/>
            <person name="Yang X."/>
            <person name="Abouelleil A."/>
            <person name="Allen N.R."/>
            <person name="Anderson S."/>
            <person name="Bloom T."/>
            <person name="Bugalter B."/>
            <person name="Butler J."/>
            <person name="Cook A."/>
            <person name="DeCaprio D."/>
            <person name="Engels R."/>
            <person name="Garber M."/>
            <person name="Gnirke A."/>
            <person name="Hafez N."/>
            <person name="Hall J.L."/>
            <person name="Norman C.H."/>
            <person name="Itoh T."/>
            <person name="Jaffe D.B."/>
            <person name="Kuroki Y."/>
            <person name="Lehoczky J."/>
            <person name="Lui A."/>
            <person name="Macdonald P."/>
            <person name="Mauceli E."/>
            <person name="Mikkelsen T.S."/>
            <person name="Naylor J.W."/>
            <person name="Nicol R."/>
            <person name="Nguyen C."/>
            <person name="Noguchi H."/>
            <person name="O'Leary S.B."/>
            <person name="Piqani B."/>
            <person name="Smith C.L."/>
            <person name="Talamas J.A."/>
            <person name="Topham K."/>
            <person name="Totoki Y."/>
            <person name="Toyoda A."/>
            <person name="Wain H.M."/>
            <person name="Young S.K."/>
            <person name="Zeng Q."/>
            <person name="Zimmer A.R."/>
            <person name="Fujiyama A."/>
            <person name="Hattori M."/>
            <person name="Birren B.W."/>
            <person name="Sakaki Y."/>
            <person name="Lander E.S."/>
        </authorList>
    </citation>
    <scope>NUCLEOTIDE SEQUENCE [LARGE SCALE GENOMIC DNA]</scope>
</reference>
<reference key="5">
    <citation type="journal article" date="2004" name="Genome Res.">
        <title>The status, quality, and expansion of the NIH full-length cDNA project: the Mammalian Gene Collection (MGC).</title>
        <authorList>
            <consortium name="The MGC Project Team"/>
        </authorList>
    </citation>
    <scope>NUCLEOTIDE SEQUENCE [LARGE SCALE MRNA]</scope>
    <scope>VARIANTS GLU-91; PRO-522 AND SER-606</scope>
    <source>
        <tissue>Placenta</tissue>
    </source>
</reference>
<reference key="6">
    <citation type="journal article" date="2007" name="BMC Genomics">
        <title>The full-ORF clone resource of the German cDNA consortium.</title>
        <authorList>
            <person name="Bechtel S."/>
            <person name="Rosenfelder H."/>
            <person name="Duda A."/>
            <person name="Schmidt C.P."/>
            <person name="Ernst U."/>
            <person name="Wellenreuther R."/>
            <person name="Mehrle A."/>
            <person name="Schuster C."/>
            <person name="Bahr A."/>
            <person name="Bloecker H."/>
            <person name="Heubner D."/>
            <person name="Hoerlein A."/>
            <person name="Michel G."/>
            <person name="Wedler H."/>
            <person name="Koehrer K."/>
            <person name="Ottenwaelder B."/>
            <person name="Poustka A."/>
            <person name="Wiemann S."/>
            <person name="Schupp I."/>
        </authorList>
    </citation>
    <scope>NUCLEOTIDE SEQUENCE [LARGE SCALE MRNA] OF 326-742</scope>
    <source>
        <tissue>Brain</tissue>
    </source>
</reference>
<reference key="7">
    <citation type="journal article" date="2003" name="J. Hum. Genet.">
        <title>Haplotype analysis of the human collectin placenta 1 (hCL-P1) gene.</title>
        <authorList>
            <person name="Ohmori H."/>
            <person name="Makita Y."/>
            <person name="Funamizu M."/>
            <person name="Chiba S."/>
            <person name="Ohtani K."/>
            <person name="Suzuki Y."/>
            <person name="Wakamiya N."/>
            <person name="Hata A."/>
        </authorList>
    </citation>
    <scope>VARIANTS PRO-522 AND SER-606</scope>
</reference>
<reference key="8">
    <citation type="journal article" date="2005" name="J. Biol. Chem.">
        <title>Selective binding of the scavenger receptor C-type lectin to Lewis X trisaccharide and related glycan ligands.</title>
        <authorList>
            <person name="Coombs P.J."/>
            <person name="Graham S.A."/>
            <person name="Drickamer K."/>
            <person name="Taylor M.E."/>
        </authorList>
    </citation>
    <scope>FUNCTION</scope>
    <scope>SUBUNIT</scope>
</reference>
<reference key="9">
    <citation type="journal article" date="2006" name="J. Neurosci. Res.">
        <title>Possible role of scavenger receptor SRCL in the clearance of amyloid-beta in Alzheimer's disease.</title>
        <authorList>
            <person name="Nakamura K."/>
            <person name="Ohya W."/>
            <person name="Funakoshi H."/>
            <person name="Sakaguchi G."/>
            <person name="Kato A."/>
            <person name="Takeda M."/>
            <person name="Kudo T."/>
            <person name="Nakamura T."/>
        </authorList>
    </citation>
    <scope>INTERACTION WITH FIBRILLAR AMYLOID-BETA PEPTIDE</scope>
    <scope>FUNCTION IN CLEARANCE OF AMYLOID-BETA</scope>
    <scope>TISSUE SPECIFICITY</scope>
</reference>
<reference key="10">
    <citation type="journal article" date="2007" name="J. Biol. Chem.">
        <title>Scavenger receptor C-type lectin binds to the leukocyte cell surface glycan Lewis X by a novel mechanism.</title>
        <authorList>
            <person name="Feinberg H."/>
            <person name="Taylor M.E."/>
            <person name="Weis W.I."/>
        </authorList>
    </citation>
    <scope>X-RAY CRYSTALLOGRAPHY (2.50 ANGSTROMS) OF 603-742 IN COMPLEX WITH CALCIUM IONS</scope>
    <scope>DISULFIDE BONDS</scope>
</reference>
<evidence type="ECO:0000250" key="1"/>
<evidence type="ECO:0000255" key="2"/>
<evidence type="ECO:0000255" key="3">
    <source>
        <dbReference type="PROSITE-ProRule" id="PRU00040"/>
    </source>
</evidence>
<evidence type="ECO:0000256" key="4">
    <source>
        <dbReference type="SAM" id="MobiDB-lite"/>
    </source>
</evidence>
<evidence type="ECO:0000269" key="5">
    <source>
    </source>
</evidence>
<evidence type="ECO:0000269" key="6">
    <source>
    </source>
</evidence>
<evidence type="ECO:0000269" key="7">
    <source>
    </source>
</evidence>
<evidence type="ECO:0000269" key="8">
    <source>
    </source>
</evidence>
<evidence type="ECO:0000269" key="9">
    <source>
    </source>
</evidence>
<evidence type="ECO:0000269" key="10">
    <source>
    </source>
</evidence>
<evidence type="ECO:0000269" key="11">
    <source>
    </source>
</evidence>
<evidence type="ECO:0000269" key="12">
    <source>
    </source>
</evidence>
<evidence type="ECO:0000305" key="13"/>
<evidence type="ECO:0007829" key="14">
    <source>
        <dbReference type="PDB" id="2OX8"/>
    </source>
</evidence>
<feature type="chain" id="PRO_0000318681" description="Collectin-12">
    <location>
        <begin position="1"/>
        <end position="742"/>
    </location>
</feature>
<feature type="topological domain" description="Cytoplasmic" evidence="2">
    <location>
        <begin position="1"/>
        <end position="37"/>
    </location>
</feature>
<feature type="transmembrane region" description="Helical; Signal-anchor for type II membrane protein" evidence="2">
    <location>
        <begin position="38"/>
        <end position="58"/>
    </location>
</feature>
<feature type="topological domain" description="Extracellular" evidence="2">
    <location>
        <begin position="59"/>
        <end position="742"/>
    </location>
</feature>
<feature type="domain" description="Collagen-like 1">
    <location>
        <begin position="443"/>
        <end position="472"/>
    </location>
</feature>
<feature type="domain" description="Collagen-like 2">
    <location>
        <begin position="473"/>
        <end position="529"/>
    </location>
</feature>
<feature type="domain" description="Collagen-like 3">
    <location>
        <begin position="530"/>
        <end position="589"/>
    </location>
</feature>
<feature type="domain" description="C-type lectin" evidence="3">
    <location>
        <begin position="614"/>
        <end position="731"/>
    </location>
</feature>
<feature type="region of interest" description="Disordered" evidence="4">
    <location>
        <begin position="439"/>
        <end position="608"/>
    </location>
</feature>
<feature type="coiled-coil region" evidence="2">
    <location>
        <begin position="73"/>
        <end position="141"/>
    </location>
</feature>
<feature type="coiled-coil region" evidence="2">
    <location>
        <begin position="215"/>
        <end position="328"/>
    </location>
</feature>
<feature type="compositionally biased region" description="Low complexity" evidence="4">
    <location>
        <begin position="502"/>
        <end position="525"/>
    </location>
</feature>
<feature type="compositionally biased region" description="Low complexity" evidence="4">
    <location>
        <begin position="534"/>
        <end position="556"/>
    </location>
</feature>
<feature type="compositionally biased region" description="Pro residues" evidence="4">
    <location>
        <begin position="571"/>
        <end position="585"/>
    </location>
</feature>
<feature type="binding site">
    <location>
        <position position="644"/>
    </location>
    <ligand>
        <name>Ca(2+)</name>
        <dbReference type="ChEBI" id="CHEBI:29108"/>
        <label>1</label>
    </ligand>
</feature>
<feature type="binding site">
    <location>
        <position position="646"/>
    </location>
    <ligand>
        <name>Ca(2+)</name>
        <dbReference type="ChEBI" id="CHEBI:29108"/>
        <label>1</label>
    </ligand>
</feature>
<feature type="binding site">
    <location>
        <position position="650"/>
    </location>
    <ligand>
        <name>Ca(2+)</name>
        <dbReference type="ChEBI" id="CHEBI:29108"/>
        <label>1</label>
    </ligand>
</feature>
<feature type="binding site">
    <location>
        <position position="670"/>
    </location>
    <ligand>
        <name>Ca(2+)</name>
        <dbReference type="ChEBI" id="CHEBI:29108"/>
        <label>2</label>
    </ligand>
</feature>
<feature type="binding site">
    <location>
        <position position="674"/>
    </location>
    <ligand>
        <name>Ca(2+)</name>
        <dbReference type="ChEBI" id="CHEBI:29108"/>
        <label>2</label>
    </ligand>
</feature>
<feature type="binding site" evidence="1">
    <location>
        <position position="691"/>
    </location>
    <ligand>
        <name>a carbohydrate</name>
        <dbReference type="ChEBI" id="CHEBI:16646"/>
    </ligand>
</feature>
<feature type="binding site" evidence="1">
    <location>
        <position position="694"/>
    </location>
    <ligand>
        <name>a carbohydrate</name>
        <dbReference type="ChEBI" id="CHEBI:16646"/>
    </ligand>
</feature>
<feature type="binding site">
    <location>
        <position position="694"/>
    </location>
    <ligand>
        <name>Ca(2+)</name>
        <dbReference type="ChEBI" id="CHEBI:29108"/>
        <label>3</label>
    </ligand>
</feature>
<feature type="binding site" evidence="1">
    <location>
        <position position="696"/>
    </location>
    <ligand>
        <name>a carbohydrate</name>
        <dbReference type="ChEBI" id="CHEBI:16646"/>
    </ligand>
</feature>
<feature type="binding site">
    <location>
        <position position="696"/>
    </location>
    <ligand>
        <name>Ca(2+)</name>
        <dbReference type="ChEBI" id="CHEBI:29108"/>
        <label>3</label>
    </ligand>
</feature>
<feature type="binding site">
    <location>
        <position position="697"/>
    </location>
    <ligand>
        <name>Ca(2+)</name>
        <dbReference type="ChEBI" id="CHEBI:29108"/>
        <label>2</label>
    </ligand>
</feature>
<feature type="binding site" evidence="1">
    <location>
        <position position="706"/>
    </location>
    <ligand>
        <name>a carbohydrate</name>
        <dbReference type="ChEBI" id="CHEBI:16646"/>
    </ligand>
</feature>
<feature type="binding site">
    <location>
        <position position="706"/>
    </location>
    <ligand>
        <name>Ca(2+)</name>
        <dbReference type="ChEBI" id="CHEBI:29108"/>
        <label>2</label>
    </ligand>
</feature>
<feature type="binding site">
    <location>
        <position position="706"/>
    </location>
    <ligand>
        <name>Ca(2+)</name>
        <dbReference type="ChEBI" id="CHEBI:29108"/>
        <label>3</label>
    </ligand>
</feature>
<feature type="binding site">
    <location>
        <position position="707"/>
    </location>
    <ligand>
        <name>Ca(2+)</name>
        <dbReference type="ChEBI" id="CHEBI:29108"/>
        <label>2</label>
    </ligand>
</feature>
<feature type="binding site" evidence="1">
    <location>
        <position position="718"/>
    </location>
    <ligand>
        <name>a carbohydrate</name>
        <dbReference type="ChEBI" id="CHEBI:16646"/>
    </ligand>
</feature>
<feature type="binding site">
    <location>
        <position position="718"/>
    </location>
    <ligand>
        <name>Ca(2+)</name>
        <dbReference type="ChEBI" id="CHEBI:29108"/>
        <label>3</label>
    </ligand>
</feature>
<feature type="binding site" evidence="1">
    <location>
        <position position="719"/>
    </location>
    <ligand>
        <name>a carbohydrate</name>
        <dbReference type="ChEBI" id="CHEBI:16646"/>
    </ligand>
</feature>
<feature type="binding site">
    <location>
        <position position="719"/>
    </location>
    <ligand>
        <name>Ca(2+)</name>
        <dbReference type="ChEBI" id="CHEBI:29108"/>
        <label>3</label>
    </ligand>
</feature>
<feature type="binding site">
    <location>
        <position position="731"/>
    </location>
    <ligand>
        <name>Ca(2+)</name>
        <dbReference type="ChEBI" id="CHEBI:29108"/>
        <label>1</label>
    </ligand>
</feature>
<feature type="glycosylation site" description="N-linked (GlcNAc...) asparagine" evidence="2">
    <location>
        <position position="67"/>
    </location>
</feature>
<feature type="glycosylation site" description="N-linked (GlcNAc...) asparagine" evidence="2">
    <location>
        <position position="159"/>
    </location>
</feature>
<feature type="glycosylation site" description="N-linked (GlcNAc...) asparagine" evidence="2">
    <location>
        <position position="168"/>
    </location>
</feature>
<feature type="glycosylation site" description="N-linked (GlcNAc...) asparagine" evidence="2">
    <location>
        <position position="271"/>
    </location>
</feature>
<feature type="disulfide bond" evidence="3 12">
    <location>
        <begin position="607"/>
        <end position="618"/>
    </location>
</feature>
<feature type="disulfide bond" evidence="3 12">
    <location>
        <begin position="635"/>
        <end position="730"/>
    </location>
</feature>
<feature type="disulfide bond" evidence="3 12">
    <location>
        <begin position="708"/>
        <end position="722"/>
    </location>
</feature>
<feature type="sequence variant" id="VAR_038853" description="In dbSNP:rs17855029." evidence="9">
    <original>K</original>
    <variation>E</variation>
    <location>
        <position position="91"/>
    </location>
</feature>
<feature type="sequence variant" id="VAR_038854" description="In dbSNP:rs8098850.">
    <original>I</original>
    <variation>V</variation>
    <location>
        <position position="487"/>
    </location>
</feature>
<feature type="sequence variant" id="VAR_038855" description="In dbSNP:rs2305025." evidence="5 6 7 8 9">
    <original>S</original>
    <variation>P</variation>
    <location>
        <position position="522"/>
    </location>
</feature>
<feature type="sequence variant" id="VAR_038856" description="In dbSNP:rs2305027." evidence="5 7 9">
    <original>G</original>
    <variation>S</variation>
    <location>
        <position position="606"/>
    </location>
</feature>
<feature type="sequence conflict" description="In Ref. 1; BAB39148." evidence="13" ref="1">
    <original>Q</original>
    <variation>P</variation>
    <location>
        <position position="12"/>
    </location>
</feature>
<feature type="sequence conflict" description="In Ref. 1; BAB39148." evidence="13" ref="1">
    <original>Y</original>
    <variation>F</variation>
    <location>
        <position position="16"/>
    </location>
</feature>
<feature type="sequence conflict" description="In Ref. 1; BAB39148." evidence="13" ref="1">
    <original>Q</original>
    <variation>H</variation>
    <location>
        <position position="22"/>
    </location>
</feature>
<feature type="sequence conflict" description="In Ref. 1; BAB39148." evidence="13" ref="1">
    <original>T</original>
    <variation>P</variation>
    <location>
        <position position="28"/>
    </location>
</feature>
<feature type="sequence conflict" description="In Ref. 1; BAB39148." evidence="13" ref="1">
    <original>K</original>
    <variation>H</variation>
    <location>
        <position position="31"/>
    </location>
</feature>
<feature type="sequence conflict" description="In Ref. 3; BAD83592." evidence="13" ref="3">
    <original>M</original>
    <variation>V</variation>
    <location>
        <position position="72"/>
    </location>
</feature>
<feature type="strand" evidence="14">
    <location>
        <begin position="612"/>
        <end position="614"/>
    </location>
</feature>
<feature type="strand" evidence="14">
    <location>
        <begin position="617"/>
        <end position="621"/>
    </location>
</feature>
<feature type="helix" evidence="14">
    <location>
        <begin position="628"/>
        <end position="637"/>
    </location>
</feature>
<feature type="helix" evidence="14">
    <location>
        <begin position="648"/>
        <end position="657"/>
    </location>
</feature>
<feature type="strand" evidence="14">
    <location>
        <begin position="664"/>
        <end position="669"/>
    </location>
</feature>
<feature type="strand" evidence="14">
    <location>
        <begin position="671"/>
        <end position="673"/>
    </location>
</feature>
<feature type="turn" evidence="14">
    <location>
        <begin position="692"/>
        <end position="700"/>
    </location>
</feature>
<feature type="strand" evidence="14">
    <location>
        <begin position="708"/>
        <end position="711"/>
    </location>
</feature>
<feature type="strand" evidence="14">
    <location>
        <begin position="717"/>
        <end position="720"/>
    </location>
</feature>
<feature type="strand" evidence="14">
    <location>
        <begin position="726"/>
        <end position="733"/>
    </location>
</feature>
<sequence>MKDDFAEEEEVQSFGYKRFGIQEGTQCTKCKNNWALKFSIILLYILCALLTITVAILGYKVVEKMDNVTGGMETSRQTYDDKLTAVESDLKKLGDQTGKKAISTNSELSTFRSDILDLRQQLREITEKTSKNKDTLEKLQASGDALVDRQSQLKETLENNSFLITTVNKTLQAYNGYVTNLQQDTSVLQGNLQNQMYSHNVVIMNLNNLNLTQVQQRNLITNLQRSVDDTSQAIQRIKNDFQNLQQVFLQAKKDTDWLKEKVQSLQTLAANNSALAKANNDTLEDMNSQLNSFTGQMENITTISQANEQNLKDLQDLHKDAENRTAIKFNQLEERFQLFETDIVNIISNISYTAHHLRTLTSNLNEVRTTCTDTLTKHTDDLTSLNNTLANIRLDSVSLRMQQDLMRSRLDTEVANLSVIMEEMKLVDSKHGQLIKNFTILQGPPGPRGPRGDRGSQGPPGPTGNKGQKGEKGEPGPPGPAGERGPIGPAGPPGERGGKGSKGSQGPKGSRGSPGKPGPQGSSGDPGPPGPPGKEGLPGPQGPPGFQGLQGTVGEPGVPGPRGLPGLPGVPGMPGPKGPPGPPGPSGAVVPLALQNEPTPAPEDNGCPPHWKNFTDKCYYFSVEKEIFEDAKLFCEDKSSHLVFINTREEQQWIKKQMVGRESHWIGLTDSERENEWKWLDGTSPDYKNWKAGQPDNWGHGHGPGEDCAGLIYAGQWNDFQCEDVNNFICEKDRETVLSSAL</sequence>
<gene>
    <name type="primary">COLEC12</name>
    <name type="synonym">CLP1</name>
    <name type="synonym">NSR2</name>
    <name type="synonym">SCARA4</name>
    <name type="synonym">SRCL</name>
</gene>